<dbReference type="EC" id="2.3.1.180" evidence="1"/>
<dbReference type="EMBL" id="AE015928">
    <property type="protein sequence ID" value="AAO78939.1"/>
    <property type="molecule type" value="Genomic_DNA"/>
</dbReference>
<dbReference type="RefSeq" id="NP_812745.1">
    <property type="nucleotide sequence ID" value="NC_004663.1"/>
</dbReference>
<dbReference type="RefSeq" id="WP_008760764.1">
    <property type="nucleotide sequence ID" value="NZ_UYXG01000011.1"/>
</dbReference>
<dbReference type="SMR" id="Q8A137"/>
<dbReference type="FunCoup" id="Q8A137">
    <property type="interactions" value="486"/>
</dbReference>
<dbReference type="STRING" id="226186.BT_3834"/>
<dbReference type="PaxDb" id="226186-BT_3834"/>
<dbReference type="EnsemblBacteria" id="AAO78939">
    <property type="protein sequence ID" value="AAO78939"/>
    <property type="gene ID" value="BT_3834"/>
</dbReference>
<dbReference type="KEGG" id="bth:BT_3834"/>
<dbReference type="PATRIC" id="fig|226186.12.peg.3898"/>
<dbReference type="eggNOG" id="COG0332">
    <property type="taxonomic scope" value="Bacteria"/>
</dbReference>
<dbReference type="HOGENOM" id="CLU_039592_3_1_10"/>
<dbReference type="InParanoid" id="Q8A137"/>
<dbReference type="OrthoDB" id="9815506at2"/>
<dbReference type="UniPathway" id="UPA00094"/>
<dbReference type="Proteomes" id="UP000001414">
    <property type="component" value="Chromosome"/>
</dbReference>
<dbReference type="GO" id="GO:0005737">
    <property type="term" value="C:cytoplasm"/>
    <property type="evidence" value="ECO:0007669"/>
    <property type="project" value="UniProtKB-SubCell"/>
</dbReference>
<dbReference type="GO" id="GO:0004315">
    <property type="term" value="F:3-oxoacyl-[acyl-carrier-protein] synthase activity"/>
    <property type="evidence" value="ECO:0007669"/>
    <property type="project" value="InterPro"/>
</dbReference>
<dbReference type="GO" id="GO:0033818">
    <property type="term" value="F:beta-ketoacyl-acyl-carrier-protein synthase III activity"/>
    <property type="evidence" value="ECO:0007669"/>
    <property type="project" value="UniProtKB-UniRule"/>
</dbReference>
<dbReference type="GO" id="GO:0006633">
    <property type="term" value="P:fatty acid biosynthetic process"/>
    <property type="evidence" value="ECO:0007669"/>
    <property type="project" value="UniProtKB-UniRule"/>
</dbReference>
<dbReference type="GO" id="GO:0044550">
    <property type="term" value="P:secondary metabolite biosynthetic process"/>
    <property type="evidence" value="ECO:0000318"/>
    <property type="project" value="GO_Central"/>
</dbReference>
<dbReference type="CDD" id="cd00830">
    <property type="entry name" value="KAS_III"/>
    <property type="match status" value="1"/>
</dbReference>
<dbReference type="FunFam" id="3.40.47.10:FF:000004">
    <property type="entry name" value="3-oxoacyl-[acyl-carrier-protein] synthase 3"/>
    <property type="match status" value="1"/>
</dbReference>
<dbReference type="Gene3D" id="3.40.47.10">
    <property type="match status" value="1"/>
</dbReference>
<dbReference type="HAMAP" id="MF_01815">
    <property type="entry name" value="FabH"/>
    <property type="match status" value="1"/>
</dbReference>
<dbReference type="InterPro" id="IPR013747">
    <property type="entry name" value="ACP_syn_III_C"/>
</dbReference>
<dbReference type="InterPro" id="IPR013751">
    <property type="entry name" value="ACP_syn_III_N"/>
</dbReference>
<dbReference type="InterPro" id="IPR004655">
    <property type="entry name" value="FabH"/>
</dbReference>
<dbReference type="InterPro" id="IPR016039">
    <property type="entry name" value="Thiolase-like"/>
</dbReference>
<dbReference type="NCBIfam" id="TIGR00747">
    <property type="entry name" value="fabH"/>
    <property type="match status" value="1"/>
</dbReference>
<dbReference type="NCBIfam" id="NF006829">
    <property type="entry name" value="PRK09352.1"/>
    <property type="match status" value="1"/>
</dbReference>
<dbReference type="PANTHER" id="PTHR34069">
    <property type="entry name" value="3-OXOACYL-[ACYL-CARRIER-PROTEIN] SYNTHASE 3"/>
    <property type="match status" value="1"/>
</dbReference>
<dbReference type="PANTHER" id="PTHR34069:SF2">
    <property type="entry name" value="BETA-KETOACYL-[ACYL-CARRIER-PROTEIN] SYNTHASE III"/>
    <property type="match status" value="1"/>
</dbReference>
<dbReference type="Pfam" id="PF08545">
    <property type="entry name" value="ACP_syn_III"/>
    <property type="match status" value="1"/>
</dbReference>
<dbReference type="Pfam" id="PF08541">
    <property type="entry name" value="ACP_syn_III_C"/>
    <property type="match status" value="1"/>
</dbReference>
<dbReference type="SUPFAM" id="SSF53901">
    <property type="entry name" value="Thiolase-like"/>
    <property type="match status" value="1"/>
</dbReference>
<organism>
    <name type="scientific">Bacteroides thetaiotaomicron (strain ATCC 29148 / DSM 2079 / JCM 5827 / CCUG 10774 / NCTC 10582 / VPI-5482 / E50)</name>
    <dbReference type="NCBI Taxonomy" id="226186"/>
    <lineage>
        <taxon>Bacteria</taxon>
        <taxon>Pseudomonadati</taxon>
        <taxon>Bacteroidota</taxon>
        <taxon>Bacteroidia</taxon>
        <taxon>Bacteroidales</taxon>
        <taxon>Bacteroidaceae</taxon>
        <taxon>Bacteroides</taxon>
    </lineage>
</organism>
<gene>
    <name evidence="1" type="primary">fabH2</name>
    <name type="ordered locus">BT_3834</name>
</gene>
<accession>Q8A137</accession>
<evidence type="ECO:0000255" key="1">
    <source>
        <dbReference type="HAMAP-Rule" id="MF_01815"/>
    </source>
</evidence>
<feature type="chain" id="PRO_0000110402" description="Beta-ketoacyl-[acyl-carrier-protein] synthase III 2">
    <location>
        <begin position="1"/>
        <end position="335"/>
    </location>
</feature>
<feature type="region of interest" description="ACP-binding" evidence="1">
    <location>
        <begin position="257"/>
        <end position="261"/>
    </location>
</feature>
<feature type="active site" evidence="1">
    <location>
        <position position="116"/>
    </location>
</feature>
<feature type="active site" evidence="1">
    <location>
        <position position="256"/>
    </location>
</feature>
<feature type="active site" evidence="1">
    <location>
        <position position="286"/>
    </location>
</feature>
<sequence length="335" mass="36979">MEKINAVITGVGGYVPDYILTNEEISKMVDTNDEWIMTRIGVKERHILNEEGLGSSYMARKAAKQLMKKTGANPDDIDLVIVATTTPDYHFPSTASILCDKLGLKNAFAFDLQAACCGFLYLMETAANFIRSGRYKKIIIVGADKMSSMVNYTDRATCPIFGDGAAAFMMEPTTEDLGVMDSILRTDGKGLPFLHMKAGGSVCPPSYFTVDNKMHYLHQEGRTVFKYAVSSMSDVSAAIAEKNGLTKDTINWVVPHQANVRIIEAVAHRMELPMDKVLVNIEHYGNTSAATLPLCIWDFEDKLKKGDNIIFTAFGAGFTWGAVYVKWGYDGKKES</sequence>
<protein>
    <recommendedName>
        <fullName evidence="1">Beta-ketoacyl-[acyl-carrier-protein] synthase III 2</fullName>
        <shortName evidence="1">Beta-ketoacyl-ACP synthase III 2</shortName>
        <shortName evidence="1">KAS III 2</shortName>
        <ecNumber evidence="1">2.3.1.180</ecNumber>
    </recommendedName>
    <alternativeName>
        <fullName evidence="1">3-oxoacyl-[acyl-carrier-protein] synthase 3 2</fullName>
    </alternativeName>
    <alternativeName>
        <fullName evidence="1">3-oxoacyl-[acyl-carrier-protein] synthase III 2</fullName>
    </alternativeName>
</protein>
<name>FABH2_BACTN</name>
<reference key="1">
    <citation type="journal article" date="2003" name="Science">
        <title>A genomic view of the human-Bacteroides thetaiotaomicron symbiosis.</title>
        <authorList>
            <person name="Xu J."/>
            <person name="Bjursell M.K."/>
            <person name="Himrod J."/>
            <person name="Deng S."/>
            <person name="Carmichael L.K."/>
            <person name="Chiang H.C."/>
            <person name="Hooper L.V."/>
            <person name="Gordon J.I."/>
        </authorList>
    </citation>
    <scope>NUCLEOTIDE SEQUENCE [LARGE SCALE GENOMIC DNA]</scope>
    <source>
        <strain>ATCC 29148 / DSM 2079 / JCM 5827 / CCUG 10774 / NCTC 10582 / VPI-5482 / E50</strain>
    </source>
</reference>
<proteinExistence type="inferred from homology"/>
<keyword id="KW-0012">Acyltransferase</keyword>
<keyword id="KW-0963">Cytoplasm</keyword>
<keyword id="KW-0275">Fatty acid biosynthesis</keyword>
<keyword id="KW-0276">Fatty acid metabolism</keyword>
<keyword id="KW-0444">Lipid biosynthesis</keyword>
<keyword id="KW-0443">Lipid metabolism</keyword>
<keyword id="KW-0511">Multifunctional enzyme</keyword>
<keyword id="KW-1185">Reference proteome</keyword>
<keyword id="KW-0808">Transferase</keyword>
<comment type="function">
    <text evidence="1">Catalyzes the condensation reaction of fatty acid synthesis by the addition to an acyl acceptor of two carbons from malonyl-ACP. Catalyzes the first condensation reaction which initiates fatty acid synthesis and may therefore play a role in governing the total rate of fatty acid production. Possesses both acetoacetyl-ACP synthase and acetyl transacylase activities. Its substrate specificity determines the biosynthesis of branched-chain and/or straight-chain of fatty acids.</text>
</comment>
<comment type="catalytic activity">
    <reaction evidence="1">
        <text>malonyl-[ACP] + acetyl-CoA + H(+) = 3-oxobutanoyl-[ACP] + CO2 + CoA</text>
        <dbReference type="Rhea" id="RHEA:12080"/>
        <dbReference type="Rhea" id="RHEA-COMP:9623"/>
        <dbReference type="Rhea" id="RHEA-COMP:9625"/>
        <dbReference type="ChEBI" id="CHEBI:15378"/>
        <dbReference type="ChEBI" id="CHEBI:16526"/>
        <dbReference type="ChEBI" id="CHEBI:57287"/>
        <dbReference type="ChEBI" id="CHEBI:57288"/>
        <dbReference type="ChEBI" id="CHEBI:78449"/>
        <dbReference type="ChEBI" id="CHEBI:78450"/>
        <dbReference type="EC" id="2.3.1.180"/>
    </reaction>
</comment>
<comment type="pathway">
    <text evidence="1">Lipid metabolism; fatty acid biosynthesis.</text>
</comment>
<comment type="subunit">
    <text evidence="1">Homodimer.</text>
</comment>
<comment type="subcellular location">
    <subcellularLocation>
        <location evidence="1">Cytoplasm</location>
    </subcellularLocation>
</comment>
<comment type="domain">
    <text evidence="1">The last Arg residue of the ACP-binding site is essential for the weak association between ACP/AcpP and FabH.</text>
</comment>
<comment type="similarity">
    <text evidence="1">Belongs to the thiolase-like superfamily. FabH family.</text>
</comment>